<name>RL18_SHEPC</name>
<keyword id="KW-0687">Ribonucleoprotein</keyword>
<keyword id="KW-0689">Ribosomal protein</keyword>
<keyword id="KW-0694">RNA-binding</keyword>
<keyword id="KW-0699">rRNA-binding</keyword>
<evidence type="ECO:0000255" key="1">
    <source>
        <dbReference type="HAMAP-Rule" id="MF_01337"/>
    </source>
</evidence>
<evidence type="ECO:0000305" key="2"/>
<comment type="function">
    <text evidence="1">This is one of the proteins that bind and probably mediate the attachment of the 5S RNA into the large ribosomal subunit, where it forms part of the central protuberance.</text>
</comment>
<comment type="subunit">
    <text evidence="1">Part of the 50S ribosomal subunit; part of the 5S rRNA/L5/L18/L25 subcomplex. Contacts the 5S and 23S rRNAs.</text>
</comment>
<comment type="similarity">
    <text evidence="1">Belongs to the universal ribosomal protein uL18 family.</text>
</comment>
<dbReference type="EMBL" id="CP000681">
    <property type="protein sequence ID" value="ABP77450.1"/>
    <property type="molecule type" value="Genomic_DNA"/>
</dbReference>
<dbReference type="SMR" id="A4YBW7"/>
<dbReference type="STRING" id="319224.Sputcn32_3743"/>
<dbReference type="KEGG" id="spc:Sputcn32_3743"/>
<dbReference type="eggNOG" id="COG0256">
    <property type="taxonomic scope" value="Bacteria"/>
</dbReference>
<dbReference type="HOGENOM" id="CLU_098841_0_1_6"/>
<dbReference type="GO" id="GO:0022625">
    <property type="term" value="C:cytosolic large ribosomal subunit"/>
    <property type="evidence" value="ECO:0007669"/>
    <property type="project" value="TreeGrafter"/>
</dbReference>
<dbReference type="GO" id="GO:0008097">
    <property type="term" value="F:5S rRNA binding"/>
    <property type="evidence" value="ECO:0007669"/>
    <property type="project" value="TreeGrafter"/>
</dbReference>
<dbReference type="GO" id="GO:0003735">
    <property type="term" value="F:structural constituent of ribosome"/>
    <property type="evidence" value="ECO:0007669"/>
    <property type="project" value="InterPro"/>
</dbReference>
<dbReference type="GO" id="GO:0006412">
    <property type="term" value="P:translation"/>
    <property type="evidence" value="ECO:0007669"/>
    <property type="project" value="UniProtKB-UniRule"/>
</dbReference>
<dbReference type="CDD" id="cd00432">
    <property type="entry name" value="Ribosomal_L18_L5e"/>
    <property type="match status" value="1"/>
</dbReference>
<dbReference type="FunFam" id="3.30.420.100:FF:000001">
    <property type="entry name" value="50S ribosomal protein L18"/>
    <property type="match status" value="1"/>
</dbReference>
<dbReference type="Gene3D" id="3.30.420.100">
    <property type="match status" value="1"/>
</dbReference>
<dbReference type="HAMAP" id="MF_01337_B">
    <property type="entry name" value="Ribosomal_uL18_B"/>
    <property type="match status" value="1"/>
</dbReference>
<dbReference type="InterPro" id="IPR004389">
    <property type="entry name" value="Ribosomal_uL18_bac-type"/>
</dbReference>
<dbReference type="InterPro" id="IPR005484">
    <property type="entry name" value="Ribosomal_uL18_bac/euk"/>
</dbReference>
<dbReference type="NCBIfam" id="TIGR00060">
    <property type="entry name" value="L18_bact"/>
    <property type="match status" value="1"/>
</dbReference>
<dbReference type="PANTHER" id="PTHR12899">
    <property type="entry name" value="39S RIBOSOMAL PROTEIN L18, MITOCHONDRIAL"/>
    <property type="match status" value="1"/>
</dbReference>
<dbReference type="PANTHER" id="PTHR12899:SF3">
    <property type="entry name" value="LARGE RIBOSOMAL SUBUNIT PROTEIN UL18M"/>
    <property type="match status" value="1"/>
</dbReference>
<dbReference type="Pfam" id="PF00861">
    <property type="entry name" value="Ribosomal_L18p"/>
    <property type="match status" value="1"/>
</dbReference>
<dbReference type="SUPFAM" id="SSF53137">
    <property type="entry name" value="Translational machinery components"/>
    <property type="match status" value="1"/>
</dbReference>
<accession>A4YBW7</accession>
<reference key="1">
    <citation type="submission" date="2007-04" db="EMBL/GenBank/DDBJ databases">
        <title>Complete sequence of Shewanella putrefaciens CN-32.</title>
        <authorList>
            <consortium name="US DOE Joint Genome Institute"/>
            <person name="Copeland A."/>
            <person name="Lucas S."/>
            <person name="Lapidus A."/>
            <person name="Barry K."/>
            <person name="Detter J.C."/>
            <person name="Glavina del Rio T."/>
            <person name="Hammon N."/>
            <person name="Israni S."/>
            <person name="Dalin E."/>
            <person name="Tice H."/>
            <person name="Pitluck S."/>
            <person name="Chain P."/>
            <person name="Malfatti S."/>
            <person name="Shin M."/>
            <person name="Vergez L."/>
            <person name="Schmutz J."/>
            <person name="Larimer F."/>
            <person name="Land M."/>
            <person name="Hauser L."/>
            <person name="Kyrpides N."/>
            <person name="Mikhailova N."/>
            <person name="Romine M.F."/>
            <person name="Fredrickson J."/>
            <person name="Tiedje J."/>
            <person name="Richardson P."/>
        </authorList>
    </citation>
    <scope>NUCLEOTIDE SEQUENCE [LARGE SCALE GENOMIC DNA]</scope>
    <source>
        <strain>CN-32 / ATCC BAA-453</strain>
    </source>
</reference>
<protein>
    <recommendedName>
        <fullName evidence="1">Large ribosomal subunit protein uL18</fullName>
    </recommendedName>
    <alternativeName>
        <fullName evidence="2">50S ribosomal protein L18</fullName>
    </alternativeName>
</protein>
<feature type="chain" id="PRO_1000053109" description="Large ribosomal subunit protein uL18">
    <location>
        <begin position="1"/>
        <end position="116"/>
    </location>
</feature>
<proteinExistence type="inferred from homology"/>
<sequence>MDKKTSRLRRAIRARKKIQELGVNRLVVHRTPRHIYAQVINPEAQVVAAASTVEKAVKEQLKSTGNVDAAKAVGKFVAERAIEKGVTSVAFDRSGFKYHGRVAALADAAREAGLQF</sequence>
<gene>
    <name evidence="1" type="primary">rplR</name>
    <name type="ordered locus">Sputcn32_3743</name>
</gene>
<organism>
    <name type="scientific">Shewanella putrefaciens (strain CN-32 / ATCC BAA-453)</name>
    <dbReference type="NCBI Taxonomy" id="319224"/>
    <lineage>
        <taxon>Bacteria</taxon>
        <taxon>Pseudomonadati</taxon>
        <taxon>Pseudomonadota</taxon>
        <taxon>Gammaproteobacteria</taxon>
        <taxon>Alteromonadales</taxon>
        <taxon>Shewanellaceae</taxon>
        <taxon>Shewanella</taxon>
    </lineage>
</organism>